<sequence>MYILDTGARFSAVRFSPVFNPPPTSLRRRYFIVRANLPFPKHQAKYHKELEVAIDAVDRACRLCVDVKRSLFSSKEKIVEKNDQTPVTIADFGVQALVSLELSKLFPSIPLVAEEDSHFVRANNLVSSVVSEVKSKASIGDNHLSDADVLEAIDRGGKDAYTFCNKPATYWVLDPIDGTRGFLKGDEALYVVGLALVVDNEIVLGVMGCPNWPGDSSDGSTGTLMLSHIGCGTWTKKLQNVSGNVAGDWIRCFVDACVLMNKARFCIQESQTWESLPLSGFFDASTVSEDLKHKEILLLPTCCGSLCKYLMVASGRASVFLLRAKTQRTIKSWDHAVGIICVHEAGGKVTDWEGDEINLEEDQSERRLIFPAGGVVVSNGSLHNQILEMISSASPTL</sequence>
<feature type="transit peptide" description="Mitochondrion" evidence="3">
    <location>
        <begin position="1"/>
        <end position="16"/>
    </location>
</feature>
<feature type="chain" id="PRO_0000015638" description="Putative 3'(2'),5'-bisphosphate nucleotidase, mitochondrial">
    <location>
        <begin position="17"/>
        <end position="397"/>
    </location>
</feature>
<feature type="active site" description="Proton acceptor" evidence="1">
    <location>
        <position position="91"/>
    </location>
</feature>
<feature type="active site" description="Proton acceptor" evidence="1">
    <location>
        <position position="179"/>
    </location>
</feature>
<feature type="binding site" evidence="1">
    <location>
        <position position="114"/>
    </location>
    <ligand>
        <name>Mg(2+)</name>
        <dbReference type="ChEBI" id="CHEBI:18420"/>
        <label>1</label>
    </ligand>
</feature>
<feature type="binding site" evidence="1">
    <location>
        <position position="114"/>
    </location>
    <ligand>
        <name>Mg(2+)</name>
        <dbReference type="ChEBI" id="CHEBI:18420"/>
        <label>3</label>
    </ligand>
</feature>
<feature type="binding site" evidence="1">
    <location>
        <position position="174"/>
    </location>
    <ligand>
        <name>Mg(2+)</name>
        <dbReference type="ChEBI" id="CHEBI:18420"/>
        <label>1</label>
    </ligand>
</feature>
<feature type="binding site" evidence="1">
    <location>
        <position position="174"/>
    </location>
    <ligand>
        <name>Mg(2+)</name>
        <dbReference type="ChEBI" id="CHEBI:18420"/>
        <label>2</label>
    </ligand>
</feature>
<feature type="binding site" evidence="1">
    <location>
        <position position="176"/>
    </location>
    <ligand>
        <name>Mg(2+)</name>
        <dbReference type="ChEBI" id="CHEBI:18420"/>
        <label>1</label>
    </ligand>
</feature>
<feature type="binding site" evidence="1">
    <location>
        <position position="177"/>
    </location>
    <ligand>
        <name>Mg(2+)</name>
        <dbReference type="ChEBI" id="CHEBI:18420"/>
        <label>2</label>
    </ligand>
</feature>
<feature type="binding site" evidence="1">
    <location>
        <position position="179"/>
    </location>
    <ligand>
        <name>adenosine 3',5'-bisphosphate</name>
        <dbReference type="ChEBI" id="CHEBI:58343"/>
    </ligand>
</feature>
<feature type="binding site" evidence="1">
    <location>
        <position position="305"/>
    </location>
    <ligand>
        <name>adenosine 3',5'-bisphosphate</name>
        <dbReference type="ChEBI" id="CHEBI:58343"/>
    </ligand>
</feature>
<feature type="binding site" evidence="1">
    <location>
        <position position="305"/>
    </location>
    <ligand>
        <name>AMP</name>
        <dbReference type="ChEBI" id="CHEBI:456215"/>
    </ligand>
</feature>
<feature type="binding site" evidence="1">
    <location>
        <position position="308"/>
    </location>
    <ligand>
        <name>adenosine 3',5'-bisphosphate</name>
        <dbReference type="ChEBI" id="CHEBI:58343"/>
    </ligand>
</feature>
<feature type="binding site" evidence="1">
    <location>
        <position position="308"/>
    </location>
    <ligand>
        <name>AMP</name>
        <dbReference type="ChEBI" id="CHEBI:456215"/>
    </ligand>
</feature>
<feature type="binding site" evidence="1">
    <location>
        <position position="334"/>
    </location>
    <ligand>
        <name>adenosine 3',5'-bisphosphate</name>
        <dbReference type="ChEBI" id="CHEBI:58343"/>
    </ligand>
</feature>
<feature type="binding site" evidence="1">
    <location>
        <position position="334"/>
    </location>
    <ligand>
        <name>AMP</name>
        <dbReference type="ChEBI" id="CHEBI:456215"/>
    </ligand>
</feature>
<feature type="binding site" evidence="1">
    <location>
        <position position="334"/>
    </location>
    <ligand>
        <name>Mg(2+)</name>
        <dbReference type="ChEBI" id="CHEBI:18420"/>
        <label>2</label>
    </ligand>
</feature>
<protein>
    <recommendedName>
        <fullName>Putative 3'(2'),5'-bisphosphate nucleotidase, mitochondrial</fullName>
        <ecNumber evidence="2">3.1.3.7</ecNumber>
    </recommendedName>
    <alternativeName>
        <fullName>3'(2'),5-bisphosphonucleoside 3'(2')-phosphohydrolase</fullName>
    </alternativeName>
    <alternativeName>
        <fullName>DPNPase</fullName>
    </alternativeName>
</protein>
<keyword id="KW-0378">Hydrolase</keyword>
<keyword id="KW-0460">Magnesium</keyword>
<keyword id="KW-0479">Metal-binding</keyword>
<keyword id="KW-0496">Mitochondrion</keyword>
<keyword id="KW-1185">Reference proteome</keyword>
<keyword id="KW-0809">Transit peptide</keyword>
<dbReference type="EC" id="3.1.3.7" evidence="2"/>
<dbReference type="EMBL" id="AC012392">
    <property type="status" value="NOT_ANNOTATED_CDS"/>
    <property type="molecule type" value="Genomic_DNA"/>
</dbReference>
<dbReference type="EMBL" id="AF162444">
    <property type="protein sequence ID" value="AAD48973.1"/>
    <property type="status" value="ALT_INIT"/>
    <property type="molecule type" value="Genomic_DNA"/>
</dbReference>
<dbReference type="EMBL" id="AL161502">
    <property type="protein sequence ID" value="CAB81051.1"/>
    <property type="molecule type" value="Genomic_DNA"/>
</dbReference>
<dbReference type="EMBL" id="CP002687">
    <property type="protein sequence ID" value="AEE82476.1"/>
    <property type="molecule type" value="Genomic_DNA"/>
</dbReference>
<dbReference type="EMBL" id="AY085591">
    <property type="protein sequence ID" value="AAM62812.1"/>
    <property type="molecule type" value="mRNA"/>
</dbReference>
<dbReference type="PIR" id="A85064">
    <property type="entry name" value="A85064"/>
</dbReference>
<dbReference type="RefSeq" id="NP_192418.1">
    <property type="nucleotide sequence ID" value="NM_116748.4"/>
</dbReference>
<dbReference type="SMR" id="Q9M0Y6"/>
<dbReference type="FunCoup" id="Q9M0Y6">
    <property type="interactions" value="445"/>
</dbReference>
<dbReference type="STRING" id="3702.Q9M0Y6"/>
<dbReference type="PaxDb" id="3702-AT4G05090.1"/>
<dbReference type="ProteomicsDB" id="220406"/>
<dbReference type="EnsemblPlants" id="AT4G05090.1">
    <property type="protein sequence ID" value="AT4G05090.1"/>
    <property type="gene ID" value="AT4G05090"/>
</dbReference>
<dbReference type="GeneID" id="825853"/>
<dbReference type="Gramene" id="AT4G05090.1">
    <property type="protein sequence ID" value="AT4G05090.1"/>
    <property type="gene ID" value="AT4G05090"/>
</dbReference>
<dbReference type="KEGG" id="ath:AT4G05090"/>
<dbReference type="Araport" id="AT4G05090"/>
<dbReference type="TAIR" id="AT4G05090"/>
<dbReference type="eggNOG" id="KOG1528">
    <property type="taxonomic scope" value="Eukaryota"/>
</dbReference>
<dbReference type="HOGENOM" id="CLU_033446_0_0_1"/>
<dbReference type="InParanoid" id="Q9M0Y6"/>
<dbReference type="OMA" id="EGCIFFA"/>
<dbReference type="OrthoDB" id="411145at2759"/>
<dbReference type="PhylomeDB" id="Q9M0Y6"/>
<dbReference type="BioCyc" id="ARA:AT4G05090-MONOMER"/>
<dbReference type="PRO" id="PR:Q9M0Y6"/>
<dbReference type="Proteomes" id="UP000006548">
    <property type="component" value="Chromosome 4"/>
</dbReference>
<dbReference type="ExpressionAtlas" id="Q9M0Y6">
    <property type="expression patterns" value="baseline and differential"/>
</dbReference>
<dbReference type="GO" id="GO:0009507">
    <property type="term" value="C:chloroplast"/>
    <property type="evidence" value="ECO:0007005"/>
    <property type="project" value="TAIR"/>
</dbReference>
<dbReference type="GO" id="GO:0005739">
    <property type="term" value="C:mitochondrion"/>
    <property type="evidence" value="ECO:0007669"/>
    <property type="project" value="UniProtKB-SubCell"/>
</dbReference>
<dbReference type="GO" id="GO:0008441">
    <property type="term" value="F:3'(2'),5'-bisphosphate nucleotidase activity"/>
    <property type="evidence" value="ECO:0007669"/>
    <property type="project" value="UniProtKB-EC"/>
</dbReference>
<dbReference type="GO" id="GO:0046872">
    <property type="term" value="F:metal ion binding"/>
    <property type="evidence" value="ECO:0007669"/>
    <property type="project" value="UniProtKB-KW"/>
</dbReference>
<dbReference type="CDD" id="cd01517">
    <property type="entry name" value="PAP_phosphatase"/>
    <property type="match status" value="1"/>
</dbReference>
<dbReference type="FunFam" id="3.30.540.10:FF:000022">
    <property type="entry name" value="Putative PAP-specific phosphatase, mitochondrial"/>
    <property type="match status" value="1"/>
</dbReference>
<dbReference type="FunFam" id="3.40.190.80:FF:000017">
    <property type="entry name" value="Putative PAP-specific phosphatase, mitochondrial"/>
    <property type="match status" value="1"/>
</dbReference>
<dbReference type="Gene3D" id="3.40.190.80">
    <property type="match status" value="1"/>
</dbReference>
<dbReference type="Gene3D" id="3.30.540.10">
    <property type="entry name" value="Fructose-1,6-Bisphosphatase, subunit A, domain 1"/>
    <property type="match status" value="1"/>
</dbReference>
<dbReference type="InterPro" id="IPR020583">
    <property type="entry name" value="Inositol_monoP_metal-BS"/>
</dbReference>
<dbReference type="InterPro" id="IPR051090">
    <property type="entry name" value="Inositol_monoP_superfamily"/>
</dbReference>
<dbReference type="InterPro" id="IPR000760">
    <property type="entry name" value="Inositol_monophosphatase-like"/>
</dbReference>
<dbReference type="PANTHER" id="PTHR43200:SF4">
    <property type="entry name" value="PAP-SPECIFIC PHOSPHATASE, MITOCHONDRIAL-RELATED"/>
    <property type="match status" value="1"/>
</dbReference>
<dbReference type="PANTHER" id="PTHR43200">
    <property type="entry name" value="PHOSPHATASE"/>
    <property type="match status" value="1"/>
</dbReference>
<dbReference type="Pfam" id="PF00459">
    <property type="entry name" value="Inositol_P"/>
    <property type="match status" value="1"/>
</dbReference>
<dbReference type="SUPFAM" id="SSF56655">
    <property type="entry name" value="Carbohydrate phosphatase"/>
    <property type="match status" value="1"/>
</dbReference>
<dbReference type="PROSITE" id="PS00629">
    <property type="entry name" value="IMP_1"/>
    <property type="match status" value="1"/>
</dbReference>
<evidence type="ECO:0000250" key="1">
    <source>
        <dbReference type="UniProtKB" id="P32179"/>
    </source>
</evidence>
<evidence type="ECO:0000250" key="2">
    <source>
        <dbReference type="UniProtKB" id="Q42546"/>
    </source>
</evidence>
<evidence type="ECO:0000255" key="3"/>
<evidence type="ECO:0000305" key="4"/>
<organism>
    <name type="scientific">Arabidopsis thaliana</name>
    <name type="common">Mouse-ear cress</name>
    <dbReference type="NCBI Taxonomy" id="3702"/>
    <lineage>
        <taxon>Eukaryota</taxon>
        <taxon>Viridiplantae</taxon>
        <taxon>Streptophyta</taxon>
        <taxon>Embryophyta</taxon>
        <taxon>Tracheophyta</taxon>
        <taxon>Spermatophyta</taxon>
        <taxon>Magnoliopsida</taxon>
        <taxon>eudicotyledons</taxon>
        <taxon>Gunneridae</taxon>
        <taxon>Pentapetalae</taxon>
        <taxon>rosids</taxon>
        <taxon>malvids</taxon>
        <taxon>Brassicales</taxon>
        <taxon>Brassicaceae</taxon>
        <taxon>Camelineae</taxon>
        <taxon>Arabidopsis</taxon>
    </lineage>
</organism>
<name>DPNPM_ARATH</name>
<accession>Q9M0Y6</accession>
<accession>Q9S9S9</accession>
<gene>
    <name type="ordered locus">At4g05090</name>
    <name type="ORF">C17L7.10</name>
    <name type="ORF">T32N4.1</name>
</gene>
<proteinExistence type="evidence at transcript level"/>
<reference key="1">
    <citation type="journal article" date="1999" name="Nature">
        <title>Sequence and analysis of chromosome 4 of the plant Arabidopsis thaliana.</title>
        <authorList>
            <person name="Mayer K.F.X."/>
            <person name="Schueller C."/>
            <person name="Wambutt R."/>
            <person name="Murphy G."/>
            <person name="Volckaert G."/>
            <person name="Pohl T."/>
            <person name="Duesterhoeft A."/>
            <person name="Stiekema W."/>
            <person name="Entian K.-D."/>
            <person name="Terryn N."/>
            <person name="Harris B."/>
            <person name="Ansorge W."/>
            <person name="Brandt P."/>
            <person name="Grivell L.A."/>
            <person name="Rieger M."/>
            <person name="Weichselgartner M."/>
            <person name="de Simone V."/>
            <person name="Obermaier B."/>
            <person name="Mache R."/>
            <person name="Mueller M."/>
            <person name="Kreis M."/>
            <person name="Delseny M."/>
            <person name="Puigdomenech P."/>
            <person name="Watson M."/>
            <person name="Schmidtheini T."/>
            <person name="Reichert B."/>
            <person name="Portetelle D."/>
            <person name="Perez-Alonso M."/>
            <person name="Boutry M."/>
            <person name="Bancroft I."/>
            <person name="Vos P."/>
            <person name="Hoheisel J."/>
            <person name="Zimmermann W."/>
            <person name="Wedler H."/>
            <person name="Ridley P."/>
            <person name="Langham S.-A."/>
            <person name="McCullagh B."/>
            <person name="Bilham L."/>
            <person name="Robben J."/>
            <person name="van der Schueren J."/>
            <person name="Grymonprez B."/>
            <person name="Chuang Y.-J."/>
            <person name="Vandenbussche F."/>
            <person name="Braeken M."/>
            <person name="Weltjens I."/>
            <person name="Voet M."/>
            <person name="Bastiaens I."/>
            <person name="Aert R."/>
            <person name="Defoor E."/>
            <person name="Weitzenegger T."/>
            <person name="Bothe G."/>
            <person name="Ramsperger U."/>
            <person name="Hilbert H."/>
            <person name="Braun M."/>
            <person name="Holzer E."/>
            <person name="Brandt A."/>
            <person name="Peters S."/>
            <person name="van Staveren M."/>
            <person name="Dirkse W."/>
            <person name="Mooijman P."/>
            <person name="Klein Lankhorst R."/>
            <person name="Rose M."/>
            <person name="Hauf J."/>
            <person name="Koetter P."/>
            <person name="Berneiser S."/>
            <person name="Hempel S."/>
            <person name="Feldpausch M."/>
            <person name="Lamberth S."/>
            <person name="Van den Daele H."/>
            <person name="De Keyser A."/>
            <person name="Buysshaert C."/>
            <person name="Gielen J."/>
            <person name="Villarroel R."/>
            <person name="De Clercq R."/>
            <person name="van Montagu M."/>
            <person name="Rogers J."/>
            <person name="Cronin A."/>
            <person name="Quail M.A."/>
            <person name="Bray-Allen S."/>
            <person name="Clark L."/>
            <person name="Doggett J."/>
            <person name="Hall S."/>
            <person name="Kay M."/>
            <person name="Lennard N."/>
            <person name="McLay K."/>
            <person name="Mayes R."/>
            <person name="Pettett A."/>
            <person name="Rajandream M.A."/>
            <person name="Lyne M."/>
            <person name="Benes V."/>
            <person name="Rechmann S."/>
            <person name="Borkova D."/>
            <person name="Bloecker H."/>
            <person name="Scharfe M."/>
            <person name="Grimm M."/>
            <person name="Loehnert T.-H."/>
            <person name="Dose S."/>
            <person name="de Haan M."/>
            <person name="Maarse A.C."/>
            <person name="Schaefer M."/>
            <person name="Mueller-Auer S."/>
            <person name="Gabel C."/>
            <person name="Fuchs M."/>
            <person name="Fartmann B."/>
            <person name="Granderath K."/>
            <person name="Dauner D."/>
            <person name="Herzl A."/>
            <person name="Neumann S."/>
            <person name="Argiriou A."/>
            <person name="Vitale D."/>
            <person name="Liguori R."/>
            <person name="Piravandi E."/>
            <person name="Massenet O."/>
            <person name="Quigley F."/>
            <person name="Clabauld G."/>
            <person name="Muendlein A."/>
            <person name="Felber R."/>
            <person name="Schnabl S."/>
            <person name="Hiller R."/>
            <person name="Schmidt W."/>
            <person name="Lecharny A."/>
            <person name="Aubourg S."/>
            <person name="Chefdor F."/>
            <person name="Cooke R."/>
            <person name="Berger C."/>
            <person name="Monfort A."/>
            <person name="Casacuberta E."/>
            <person name="Gibbons T."/>
            <person name="Weber N."/>
            <person name="Vandenbol M."/>
            <person name="Bargues M."/>
            <person name="Terol J."/>
            <person name="Torres A."/>
            <person name="Perez-Perez A."/>
            <person name="Purnelle B."/>
            <person name="Bent E."/>
            <person name="Johnson S."/>
            <person name="Tacon D."/>
            <person name="Jesse T."/>
            <person name="Heijnen L."/>
            <person name="Schwarz S."/>
            <person name="Scholler P."/>
            <person name="Heber S."/>
            <person name="Francs P."/>
            <person name="Bielke C."/>
            <person name="Frishman D."/>
            <person name="Haase D."/>
            <person name="Lemcke K."/>
            <person name="Mewes H.-W."/>
            <person name="Stocker S."/>
            <person name="Zaccaria P."/>
            <person name="Bevan M."/>
            <person name="Wilson R.K."/>
            <person name="de la Bastide M."/>
            <person name="Habermann K."/>
            <person name="Parnell L."/>
            <person name="Dedhia N."/>
            <person name="Gnoj L."/>
            <person name="Schutz K."/>
            <person name="Huang E."/>
            <person name="Spiegel L."/>
            <person name="Sekhon M."/>
            <person name="Murray J."/>
            <person name="Sheet P."/>
            <person name="Cordes M."/>
            <person name="Abu-Threideh J."/>
            <person name="Stoneking T."/>
            <person name="Kalicki J."/>
            <person name="Graves T."/>
            <person name="Harmon G."/>
            <person name="Edwards J."/>
            <person name="Latreille P."/>
            <person name="Courtney L."/>
            <person name="Cloud J."/>
            <person name="Abbott A."/>
            <person name="Scott K."/>
            <person name="Johnson D."/>
            <person name="Minx P."/>
            <person name="Bentley D."/>
            <person name="Fulton B."/>
            <person name="Miller N."/>
            <person name="Greco T."/>
            <person name="Kemp K."/>
            <person name="Kramer J."/>
            <person name="Fulton L."/>
            <person name="Mardis E."/>
            <person name="Dante M."/>
            <person name="Pepin K."/>
            <person name="Hillier L.W."/>
            <person name="Nelson J."/>
            <person name="Spieth J."/>
            <person name="Ryan E."/>
            <person name="Andrews S."/>
            <person name="Geisel C."/>
            <person name="Layman D."/>
            <person name="Du H."/>
            <person name="Ali J."/>
            <person name="Berghoff A."/>
            <person name="Jones K."/>
            <person name="Drone K."/>
            <person name="Cotton M."/>
            <person name="Joshu C."/>
            <person name="Antonoiu B."/>
            <person name="Zidanic M."/>
            <person name="Strong C."/>
            <person name="Sun H."/>
            <person name="Lamar B."/>
            <person name="Yordan C."/>
            <person name="Ma P."/>
            <person name="Zhong J."/>
            <person name="Preston R."/>
            <person name="Vil D."/>
            <person name="Shekher M."/>
            <person name="Matero A."/>
            <person name="Shah R."/>
            <person name="Swaby I.K."/>
            <person name="O'Shaughnessy A."/>
            <person name="Rodriguez M."/>
            <person name="Hoffman J."/>
            <person name="Till S."/>
            <person name="Granat S."/>
            <person name="Shohdy N."/>
            <person name="Hasegawa A."/>
            <person name="Hameed A."/>
            <person name="Lodhi M."/>
            <person name="Johnson A."/>
            <person name="Chen E."/>
            <person name="Marra M.A."/>
            <person name="Martienssen R."/>
            <person name="McCombie W.R."/>
        </authorList>
    </citation>
    <scope>NUCLEOTIDE SEQUENCE [LARGE SCALE GENOMIC DNA]</scope>
    <source>
        <strain>cv. Columbia</strain>
    </source>
</reference>
<reference key="2">
    <citation type="journal article" date="2017" name="Plant J.">
        <title>Araport11: a complete reannotation of the Arabidopsis thaliana reference genome.</title>
        <authorList>
            <person name="Cheng C.Y."/>
            <person name="Krishnakumar V."/>
            <person name="Chan A.P."/>
            <person name="Thibaud-Nissen F."/>
            <person name="Schobel S."/>
            <person name="Town C.D."/>
        </authorList>
    </citation>
    <scope>GENOME REANNOTATION</scope>
    <source>
        <strain>cv. Columbia</strain>
    </source>
</reference>
<reference key="3">
    <citation type="submission" date="2002-03" db="EMBL/GenBank/DDBJ databases">
        <title>Full-length cDNA from Arabidopsis thaliana.</title>
        <authorList>
            <person name="Brover V.V."/>
            <person name="Troukhan M.E."/>
            <person name="Alexandrov N.A."/>
            <person name="Lu Y.-P."/>
            <person name="Flavell R.B."/>
            <person name="Feldmann K.A."/>
        </authorList>
    </citation>
    <scope>NUCLEOTIDE SEQUENCE [LARGE SCALE MRNA]</scope>
</reference>
<comment type="function">
    <text evidence="2">Phosphatase that converts adenosine 3'-phosphate 5'-phosphosulfate (PAPS) to adenosine 5'-phosphosulfate (APS) and 3'(2')-phosphoadenosine 5'-phosphate (PAP) to AMP.</text>
</comment>
<comment type="catalytic activity">
    <reaction evidence="2">
        <text>3'-phosphoadenylyl sulfate + H2O = adenosine 5'-phosphosulfate + phosphate</text>
        <dbReference type="Rhea" id="RHEA:77639"/>
        <dbReference type="ChEBI" id="CHEBI:15377"/>
        <dbReference type="ChEBI" id="CHEBI:43474"/>
        <dbReference type="ChEBI" id="CHEBI:58243"/>
        <dbReference type="ChEBI" id="CHEBI:58339"/>
        <dbReference type="EC" id="3.1.3.7"/>
    </reaction>
    <physiologicalReaction direction="left-to-right" evidence="2">
        <dbReference type="Rhea" id="RHEA:77640"/>
    </physiologicalReaction>
</comment>
<comment type="catalytic activity">
    <reaction evidence="2">
        <text>adenosine 3',5'-bisphosphate + H2O = AMP + phosphate</text>
        <dbReference type="Rhea" id="RHEA:10040"/>
        <dbReference type="ChEBI" id="CHEBI:15377"/>
        <dbReference type="ChEBI" id="CHEBI:43474"/>
        <dbReference type="ChEBI" id="CHEBI:58343"/>
        <dbReference type="ChEBI" id="CHEBI:456215"/>
        <dbReference type="EC" id="3.1.3.7"/>
    </reaction>
    <physiologicalReaction direction="left-to-right" evidence="2">
        <dbReference type="Rhea" id="RHEA:10041"/>
    </physiologicalReaction>
</comment>
<comment type="catalytic activity">
    <reaction evidence="2">
        <text>adenosine 2',5'-bisphosphate + H2O = AMP + phosphate</text>
        <dbReference type="Rhea" id="RHEA:77643"/>
        <dbReference type="ChEBI" id="CHEBI:15377"/>
        <dbReference type="ChEBI" id="CHEBI:43474"/>
        <dbReference type="ChEBI" id="CHEBI:194156"/>
        <dbReference type="ChEBI" id="CHEBI:456215"/>
        <dbReference type="EC" id="3.1.3.7"/>
    </reaction>
    <physiologicalReaction direction="left-to-right" evidence="2">
        <dbReference type="Rhea" id="RHEA:77644"/>
    </physiologicalReaction>
</comment>
<comment type="cofactor">
    <cofactor evidence="2">
        <name>Mg(2+)</name>
        <dbReference type="ChEBI" id="CHEBI:18420"/>
    </cofactor>
</comment>
<comment type="subcellular location">
    <subcellularLocation>
        <location evidence="4">Mitochondrion</location>
    </subcellularLocation>
</comment>
<comment type="similarity">
    <text evidence="4">Belongs to the inositol monophosphatase superfamily.</text>
</comment>
<comment type="sequence caution" evidence="4">
    <conflict type="erroneous initiation">
        <sequence resource="EMBL-CDS" id="AAD48973"/>
    </conflict>
</comment>